<sequence length="169" mass="18801">MYTSGYAHRSSSFSSAASKIARVSTENTTAGLISEVVYREDQPMMTQLLLLPLLQQLGQQSRWQLWLTPQQKLSREWVQASGLPLTKVMQISQLSPCHTVESMVRALRTGNYSVVIGWLADDLTEEEHAELVDAANEGNAMGFIMRPVSASSHATRQLSGLKIHSNLYH</sequence>
<keyword id="KW-0131">Cell cycle</keyword>
<keyword id="KW-0132">Cell division</keyword>
<keyword id="KW-0227">DNA damage</keyword>
<keyword id="KW-1185">Reference proteome</keyword>
<keyword id="KW-0717">Septation</keyword>
<keyword id="KW-0742">SOS response</keyword>
<reference key="1">
    <citation type="journal article" date="1980" name="Nucleic Acids Res.">
        <title>Nucleotide sequence of the gene ompA coding the outer membrane protein II of Escherichia coli K-12.</title>
        <authorList>
            <person name="Beck E."/>
            <person name="Bremer E."/>
        </authorList>
    </citation>
    <scope>NUCLEOTIDE SEQUENCE [GENOMIC DNA]</scope>
    <source>
        <strain>K12</strain>
    </source>
</reference>
<reference key="2">
    <citation type="journal article" date="1987" name="Gene">
        <title>Evolution of the enterobacterial sulA gene: a component of the SOS system encoding an inhibitor of cell division.</title>
        <authorList>
            <person name="Freudl R."/>
            <person name="Braun G."/>
            <person name="Honore N."/>
            <person name="Cole S.T."/>
        </authorList>
    </citation>
    <scope>NUCLEOTIDE SEQUENCE [GENOMIC DNA]</scope>
    <scope>INDUCTION</scope>
</reference>
<reference key="3">
    <citation type="journal article" date="1996" name="DNA Res.">
        <title>A 718-kb DNA sequence of the Escherichia coli K-12 genome corresponding to the 12.7-28.0 min region on the linkage map.</title>
        <authorList>
            <person name="Oshima T."/>
            <person name="Aiba H."/>
            <person name="Baba T."/>
            <person name="Fujita K."/>
            <person name="Hayashi K."/>
            <person name="Honjo A."/>
            <person name="Ikemoto K."/>
            <person name="Inada T."/>
            <person name="Itoh T."/>
            <person name="Kajihara M."/>
            <person name="Kanai K."/>
            <person name="Kashimoto K."/>
            <person name="Kimura S."/>
            <person name="Kitagawa M."/>
            <person name="Makino K."/>
            <person name="Masuda S."/>
            <person name="Miki T."/>
            <person name="Mizobuchi K."/>
            <person name="Mori H."/>
            <person name="Motomura K."/>
            <person name="Nakamura Y."/>
            <person name="Nashimoto H."/>
            <person name="Nishio Y."/>
            <person name="Saito N."/>
            <person name="Sampei G."/>
            <person name="Seki Y."/>
            <person name="Tagami H."/>
            <person name="Takemoto K."/>
            <person name="Wada C."/>
            <person name="Yamamoto Y."/>
            <person name="Yano M."/>
            <person name="Horiuchi T."/>
        </authorList>
    </citation>
    <scope>NUCLEOTIDE SEQUENCE [LARGE SCALE GENOMIC DNA]</scope>
    <source>
        <strain>K12 / W3110 / ATCC 27325 / DSM 5911</strain>
    </source>
</reference>
<reference key="4">
    <citation type="journal article" date="1997" name="Science">
        <title>The complete genome sequence of Escherichia coli K-12.</title>
        <authorList>
            <person name="Blattner F.R."/>
            <person name="Plunkett G. III"/>
            <person name="Bloch C.A."/>
            <person name="Perna N.T."/>
            <person name="Burland V."/>
            <person name="Riley M."/>
            <person name="Collado-Vides J."/>
            <person name="Glasner J.D."/>
            <person name="Rode C.K."/>
            <person name="Mayhew G.F."/>
            <person name="Gregor J."/>
            <person name="Davis N.W."/>
            <person name="Kirkpatrick H.A."/>
            <person name="Goeden M.A."/>
            <person name="Rose D.J."/>
            <person name="Mau B."/>
            <person name="Shao Y."/>
        </authorList>
    </citation>
    <scope>NUCLEOTIDE SEQUENCE [LARGE SCALE GENOMIC DNA]</scope>
    <source>
        <strain>K12 / MG1655 / ATCC 47076</strain>
    </source>
</reference>
<reference key="5">
    <citation type="journal article" date="2006" name="Mol. Syst. Biol.">
        <title>Highly accurate genome sequences of Escherichia coli K-12 strains MG1655 and W3110.</title>
        <authorList>
            <person name="Hayashi K."/>
            <person name="Morooka N."/>
            <person name="Yamamoto Y."/>
            <person name="Fujita K."/>
            <person name="Isono K."/>
            <person name="Choi S."/>
            <person name="Ohtsubo E."/>
            <person name="Baba T."/>
            <person name="Wanner B.L."/>
            <person name="Mori H."/>
            <person name="Horiuchi T."/>
        </authorList>
    </citation>
    <scope>NUCLEOTIDE SEQUENCE [LARGE SCALE GENOMIC DNA]</scope>
    <source>
        <strain>K12 / W3110 / ATCC 27325 / DSM 5911</strain>
    </source>
</reference>
<reference key="6">
    <citation type="journal article" date="1983" name="Mol. Gen. Genet.">
        <title>Characterisation of the promoter for the LexA regulated sulA gene of Escherichia coli.</title>
        <authorList>
            <person name="Cole S.T."/>
        </authorList>
    </citation>
    <scope>NUCLEOTIDE SEQUENCE [GENOMIC DNA] OF 1-9</scope>
</reference>
<reference key="7">
    <citation type="journal article" date="1983" name="Proc. Natl. Acad. Sci. U.S.A.">
        <title>Protein degradation in Escherichia coli: the lon gene controls the stability of sulA protein.</title>
        <authorList>
            <person name="Mizusawa S."/>
            <person name="Gottesman S."/>
        </authorList>
    </citation>
    <scope>DEGRADATION BY LON PROTEASE</scope>
    <source>
        <strain>K12 / C600 / CR34 / ATCC 23724 / DSM 3925 / LMG 3041 / NCIB 10222</strain>
    </source>
</reference>
<reference key="8">
    <citation type="journal article" date="1984" name="Proc. Natl. Acad. Sci. U.S.A.">
        <title>Cell-division control in Escherichia coli: specific induction of the SOS function SfiA protein is sufficient to block septation.</title>
        <authorList>
            <person name="Huisman O."/>
            <person name="D'Ari R."/>
            <person name="Gottesman S."/>
        </authorList>
    </citation>
    <scope>ROLE IN BLOCKING SEPTATION</scope>
    <source>
        <strain>K12</strain>
    </source>
</reference>
<reference key="9">
    <citation type="journal article" date="1985" name="Proc. Natl. Acad. Sci. U.S.A.">
        <title>Role of the SulB (FtsZ) protein in division inhibition during the SOS response in Escherichia coli: FtsZ stabilizes the inhibitor SulA in maxicells.</title>
        <authorList>
            <person name="Jones C."/>
            <person name="Holland I.B."/>
        </authorList>
    </citation>
    <scope>INTERACTION WITH FTSZ</scope>
    <source>
        <strain>K12</strain>
    </source>
</reference>
<reference key="10">
    <citation type="journal article" date="1990" name="J. Bacteriol.">
        <title>Analysis of ftsZ mutations that confer resistance to the cell division inhibitor SulA (SfiA).</title>
        <authorList>
            <person name="Bi E."/>
            <person name="Lutkenhaus J."/>
        </authorList>
    </citation>
    <scope>ROLE IN THE INHIBITION OF Z-RING FORMATION</scope>
    <source>
        <strain>K12</strain>
    </source>
</reference>
<reference key="11">
    <citation type="journal article" date="1993" name="J. Bacteriol.">
        <title>Cell division inhibitors SulA and MinCD prevent formation of the FtsZ ring.</title>
        <authorList>
            <person name="Bi E."/>
            <person name="Lutkenhaus J."/>
        </authorList>
    </citation>
    <scope>ROLE IN THE INHIBITION OF Z-RING FORMATION</scope>
    <source>
        <strain>K12</strain>
    </source>
</reference>
<reference key="12">
    <citation type="journal article" date="1995" name="Biochem. Biophys. Res. Commun.">
        <title>A cell division inhibitor SulA of Escherichia coli directly interacts with FtsZ through GTP hydrolysis.</title>
        <authorList>
            <person name="Higashitani A."/>
            <person name="Higashitani N."/>
            <person name="Horiuchi K."/>
        </authorList>
    </citation>
    <scope>INTERACTION WITH FTSZ</scope>
    <source>
        <strain>K12 / W3110 / ATCC 27325 / DSM 5911</strain>
    </source>
</reference>
<reference key="13">
    <citation type="journal article" date="1996" name="J. Bacteriol.">
        <title>Interaction between FtsZ and inhibitors of cell division.</title>
        <authorList>
            <person name="Huang J."/>
            <person name="Cao C."/>
            <person name="Lutkenhaus J."/>
        </authorList>
    </citation>
    <scope>MUTAGENESIS OF ARG-62 AND LEU-83</scope>
</reference>
<reference key="14">
    <citation type="journal article" date="1997" name="Mol. Gen. Genet.">
        <title>Functional dissection of a cell-division inhibitor, SulA, of Escherichia coli and its negative regulation by Lon.</title>
        <authorList>
            <person name="Higashitani A."/>
            <person name="Ishii Y."/>
            <person name="Kato Y."/>
            <person name="Koriuchi K."/>
        </authorList>
    </citation>
    <scope>MUTAGENESIS OF ARG-39; ARG-62; LEU-67; LYS-72; ARG-75; GLU-76; TRP-77; LYS-87; HIS-98; ARG-105; ARG-108; VAL-115; GLY-117; GLU-126 AND HIS-128</scope>
    <source>
        <strain>K12 / W3110 / ATCC 27325 / DSM 5911</strain>
    </source>
</reference>
<reference key="15">
    <citation type="journal article" date="1998" name="Proc. Natl. Acad. Sci. U.S.A.">
        <title>Inhibition of FtsZ polymerization by SulA, an inhibitor of septation in Escherichia coli.</title>
        <authorList>
            <person name="Mukherjee A."/>
            <person name="Cao C."/>
            <person name="Lutkenhaus J."/>
        </authorList>
    </citation>
    <scope>FUNCTION</scope>
    <source>
        <strain>K12 / DH5-alpha</strain>
    </source>
</reference>
<reference key="16">
    <citation type="journal article" date="1998" name="J. Bacteriol.">
        <title>Bacterial SOS checkpoint protein SulA inhibits polymerization of purified FtsZ cell division protein.</title>
        <authorList>
            <person name="Trusca D."/>
            <person name="Scott S."/>
            <person name="Thompson C."/>
            <person name="Bramhill D."/>
        </authorList>
    </citation>
    <scope>INHIBITION OF FTSZ POLYMERIZATION</scope>
</reference>
<reference key="17">
    <citation type="journal article" date="2000" name="J. Biochem.">
        <title>Regulatory role of C-terminal residues of SulA in its degradation by Lon protease in Escherichia coli.</title>
        <authorList>
            <person name="Ishii Y."/>
            <person name="Sonezaki S."/>
            <person name="Iwasaki Y."/>
            <person name="Miyata Y."/>
            <person name="Akita K."/>
            <person name="Kato Y."/>
            <person name="Amano F."/>
        </authorList>
    </citation>
    <scope>DEGRADATION BY LON PROTEASE</scope>
    <scope>LON BINDING SITE</scope>
    <scope>MUTAGENESIS OF ILE-163; HIS-164; LEU-167 AND HIS-169</scope>
    <source>
        <strain>K12</strain>
    </source>
</reference>
<reference key="18">
    <citation type="journal article" date="2000" name="Mol. Microbiol.">
        <title>Cell division inhibitors SulA and MinC/MinD block septum formation at different steps in the assembly of the Escherichia coli division machinery.</title>
        <authorList>
            <person name="Justice S.S."/>
            <person name="Garcia-Lara J."/>
            <person name="Rothfield L.I."/>
        </authorList>
    </citation>
    <scope>FUNCTION</scope>
    <scope>SUBCELLULAR LOCATION</scope>
</reference>
<reference key="19">
    <citation type="journal article" date="2001" name="Biochem. J.">
        <title>Regulation of SulA cleavage by Lon protease by the C-terminal amino acid of SulA, histidine.</title>
        <authorList>
            <person name="Ishii Y."/>
            <person name="Amano F."/>
        </authorList>
    </citation>
    <scope>ROLE OF HIS-169 IN DEGRADATION BY LON PROTEASE</scope>
    <source>
        <strain>K12 / DH5-alpha</strain>
    </source>
</reference>
<reference key="20">
    <citation type="journal article" date="2008" name="J. Bacteriol.">
        <title>Investigation of regulation of FtsZ assembly by SulA and development of a model for FtsZ polymerization.</title>
        <authorList>
            <person name="Dajkovic A."/>
            <person name="Mukherjee A."/>
            <person name="Lutkenhaus J."/>
        </authorList>
    </citation>
    <scope>FUNCTION IN REGULATION OF FTSZ ASSEMBLY</scope>
    <source>
        <strain>K12 / W3110 / ATCC 27325 / DSM 5911</strain>
    </source>
</reference>
<reference key="21">
    <citation type="journal article" date="2009" name="Mol. Cell">
        <title>Hydroxyurea induces hydroxyl radical-mediated cell death in Escherichia coli.</title>
        <authorList>
            <person name="Davies B.W."/>
            <person name="Kohanski M.A."/>
            <person name="Simmons L.A."/>
            <person name="Winkler J.A."/>
            <person name="Collins J.J."/>
            <person name="Walker G.C."/>
        </authorList>
    </citation>
    <scope>INDUCTION BY HYDROXYUREA</scope>
    <source>
        <strain>K12 / MC4100 / ATCC 35695 / DSM 6574</strain>
    </source>
</reference>
<reference key="22">
    <citation type="journal article" date="2012" name="Mol. Microbiol.">
        <title>YeeU enhances the bundling of cytoskeletal polymers of MreB and FtsZ, antagonizing the CbtA (YeeV) toxicity in Escherichia coli.</title>
        <authorList>
            <person name="Masuda H."/>
            <person name="Tan Q."/>
            <person name="Awano N."/>
            <person name="Wu K.P."/>
            <person name="Inouye M."/>
        </authorList>
    </citation>
    <scope>NEUTRALIZED BY CBEA</scope>
    <source>
        <strain>K12 / BW25113</strain>
    </source>
</reference>
<feature type="chain" id="PRO_0000072305" description="Cell division inhibitor SulA">
    <location>
        <begin position="1"/>
        <end position="169"/>
    </location>
</feature>
<feature type="region of interest" description="FtsZ binding" evidence="1">
    <location>
        <begin position="106"/>
        <end position="112"/>
    </location>
</feature>
<feature type="region of interest" description="Lon protease binding">
    <location>
        <begin position="162"/>
        <end position="169"/>
    </location>
</feature>
<feature type="site" description="Essential for degradation by Lon protease">
    <location>
        <position position="169"/>
    </location>
</feature>
<feature type="mutagenesis site" description="No effect on degradation by Lon protease." evidence="16">
    <original>R</original>
    <variation>A</variation>
    <location>
        <position position="39"/>
    </location>
</feature>
<feature type="mutagenesis site" description="Loss of degradation by Lon protease." evidence="15 16">
    <original>R</original>
    <variation>A</variation>
    <location>
        <position position="62"/>
    </location>
</feature>
<feature type="mutagenesis site" description="Loss of activity due to loss of ability to bind to FtsZ." evidence="15 16">
    <original>R</original>
    <variation>C</variation>
    <variation>H</variation>
    <variation>S</variation>
    <location>
        <position position="62"/>
    </location>
</feature>
<feature type="mutagenesis site" description="Loss of degradation by Lon protease." evidence="16">
    <original>L</original>
    <variation>A</variation>
    <location>
        <position position="67"/>
    </location>
</feature>
<feature type="mutagenesis site" description="No effect on degradation by Lon protease." evidence="16">
    <original>K</original>
    <variation>A</variation>
    <location>
        <position position="72"/>
    </location>
</feature>
<feature type="mutagenesis site" description="No effect on degradation by Lon protease." evidence="16">
    <original>R</original>
    <variation>A</variation>
    <location>
        <position position="75"/>
    </location>
</feature>
<feature type="mutagenesis site" description="No effect on degradation by Lon protease." evidence="16">
    <original>E</original>
    <variation>A</variation>
    <location>
        <position position="76"/>
    </location>
</feature>
<feature type="mutagenesis site" description="Loss of degradation by Lon protease." evidence="16">
    <original>W</original>
    <variation>A</variation>
    <location>
        <position position="77"/>
    </location>
</feature>
<feature type="mutagenesis site" description="Loss of activity due to loss of ability to bind to FtsZ." evidence="15">
    <original>L</original>
    <variation>R</variation>
    <location>
        <position position="83"/>
    </location>
</feature>
<feature type="mutagenesis site" description="Loss of degradation by Lon protease." evidence="16">
    <original>K</original>
    <variation>A</variation>
    <location>
        <position position="87"/>
    </location>
</feature>
<feature type="mutagenesis site" description="No effect on degradation by Lon protease." evidence="16">
    <original>H</original>
    <variation>A</variation>
    <location>
        <position position="98"/>
    </location>
</feature>
<feature type="mutagenesis site" description="No effect on degradation by Lon protease." evidence="16">
    <original>R</original>
    <variation>A</variation>
    <location>
        <position position="105"/>
    </location>
</feature>
<feature type="mutagenesis site" description="No effect on degradation by Lon protease." evidence="16">
    <original>R</original>
    <variation>A</variation>
    <location>
        <position position="108"/>
    </location>
</feature>
<feature type="mutagenesis site" description="No effect on degradation by Lon protease." evidence="16">
    <original>V</original>
    <variation>A</variation>
    <location>
        <position position="115"/>
    </location>
</feature>
<feature type="mutagenesis site" description="No effect on degradation by Lon protease." evidence="16">
    <original>G</original>
    <variation>A</variation>
    <location>
        <position position="117"/>
    </location>
</feature>
<feature type="mutagenesis site" description="No effect on degradation by Lon protease." evidence="16">
    <original>E</original>
    <variation>A</variation>
    <location>
        <position position="126"/>
    </location>
</feature>
<feature type="mutagenesis site" description="No effect on degradation by Lon protease." evidence="16">
    <original>H</original>
    <variation>A</variation>
    <location>
        <position position="128"/>
    </location>
</feature>
<feature type="mutagenesis site" description="Slight decrease in degradation by Lon protease." evidence="2">
    <original>I</original>
    <variation>A</variation>
    <location>
        <position position="163"/>
    </location>
</feature>
<feature type="mutagenesis site" description="No effect on degradation by Lon protease." evidence="2">
    <original>H</original>
    <variation>A</variation>
    <location>
        <position position="164"/>
    </location>
</feature>
<feature type="mutagenesis site" description="Slight decrease in degradation by Lon protease." evidence="2">
    <original>L</original>
    <variation>A</variation>
    <location>
        <position position="167"/>
    </location>
</feature>
<feature type="mutagenesis site" description="Great decrease in degradation by Lon protease." evidence="2">
    <original>H</original>
    <variation>A</variation>
    <location>
        <position position="169"/>
    </location>
</feature>
<name>SULA_ECOLI</name>
<dbReference type="EMBL" id="V00307">
    <property type="protein sequence ID" value="CAA23587.1"/>
    <property type="status" value="ALT_FRAME"/>
    <property type="molecule type" value="Genomic_DNA"/>
</dbReference>
<dbReference type="EMBL" id="U00096">
    <property type="protein sequence ID" value="AAC74044.1"/>
    <property type="molecule type" value="Genomic_DNA"/>
</dbReference>
<dbReference type="EMBL" id="AP009048">
    <property type="protein sequence ID" value="BAA35716.1"/>
    <property type="molecule type" value="Genomic_DNA"/>
</dbReference>
<dbReference type="EMBL" id="V00358">
    <property type="protein sequence ID" value="CAA23654.1"/>
    <property type="molecule type" value="Genomic_DNA"/>
</dbReference>
<dbReference type="PIR" id="A29016">
    <property type="entry name" value="QQECA1"/>
</dbReference>
<dbReference type="RefSeq" id="NP_415478.1">
    <property type="nucleotide sequence ID" value="NC_000913.3"/>
</dbReference>
<dbReference type="RefSeq" id="WP_000288710.1">
    <property type="nucleotide sequence ID" value="NZ_STEB01000006.1"/>
</dbReference>
<dbReference type="SMR" id="P0AFZ5"/>
<dbReference type="BioGRID" id="4259653">
    <property type="interactions" value="213"/>
</dbReference>
<dbReference type="DIP" id="DIP-10945N"/>
<dbReference type="FunCoup" id="P0AFZ5">
    <property type="interactions" value="41"/>
</dbReference>
<dbReference type="IntAct" id="P0AFZ5">
    <property type="interactions" value="2"/>
</dbReference>
<dbReference type="STRING" id="511145.b0958"/>
<dbReference type="ChEMBL" id="CHEMBL1287594"/>
<dbReference type="PaxDb" id="511145-b0958"/>
<dbReference type="EnsemblBacteria" id="AAC74044">
    <property type="protein sequence ID" value="AAC74044"/>
    <property type="gene ID" value="b0958"/>
</dbReference>
<dbReference type="GeneID" id="93776456"/>
<dbReference type="GeneID" id="947335"/>
<dbReference type="KEGG" id="ecj:JW0941"/>
<dbReference type="KEGG" id="eco:b0958"/>
<dbReference type="KEGG" id="ecoc:C3026_05860"/>
<dbReference type="PATRIC" id="fig|1411691.4.peg.1316"/>
<dbReference type="EchoBASE" id="EB0977"/>
<dbReference type="eggNOG" id="COG5404">
    <property type="taxonomic scope" value="Bacteria"/>
</dbReference>
<dbReference type="HOGENOM" id="CLU_118972_1_0_6"/>
<dbReference type="InParanoid" id="P0AFZ5"/>
<dbReference type="OMA" id="YGFIMRP"/>
<dbReference type="OrthoDB" id="6464784at2"/>
<dbReference type="PhylomeDB" id="P0AFZ5"/>
<dbReference type="BioCyc" id="EcoCyc:EG10984-MONOMER"/>
<dbReference type="PRO" id="PR:P0AFZ5"/>
<dbReference type="Proteomes" id="UP000000625">
    <property type="component" value="Chromosome"/>
</dbReference>
<dbReference type="GO" id="GO:0000917">
    <property type="term" value="P:division septum assembly"/>
    <property type="evidence" value="ECO:0007669"/>
    <property type="project" value="UniProtKB-KW"/>
</dbReference>
<dbReference type="GO" id="GO:0006974">
    <property type="term" value="P:DNA damage response"/>
    <property type="evidence" value="ECO:0000270"/>
    <property type="project" value="EcoliWiki"/>
</dbReference>
<dbReference type="GO" id="GO:0006281">
    <property type="term" value="P:DNA repair"/>
    <property type="evidence" value="ECO:0000318"/>
    <property type="project" value="GO_Central"/>
</dbReference>
<dbReference type="GO" id="GO:0051782">
    <property type="term" value="P:negative regulation of cell division"/>
    <property type="evidence" value="ECO:0000315"/>
    <property type="project" value="CACAO"/>
</dbReference>
<dbReference type="GO" id="GO:0032466">
    <property type="term" value="P:negative regulation of cytokinesis"/>
    <property type="evidence" value="ECO:0000315"/>
    <property type="project" value="CACAO"/>
</dbReference>
<dbReference type="GO" id="GO:2000245">
    <property type="term" value="P:negative regulation of FtsZ-dependent cytokinesis"/>
    <property type="evidence" value="ECO:0000315"/>
    <property type="project" value="EcoCyc"/>
</dbReference>
<dbReference type="GO" id="GO:0032272">
    <property type="term" value="P:negative regulation of protein polymerization"/>
    <property type="evidence" value="ECO:0000314"/>
    <property type="project" value="EcoCyc"/>
</dbReference>
<dbReference type="GO" id="GO:0009432">
    <property type="term" value="P:SOS response"/>
    <property type="evidence" value="ECO:0000270"/>
    <property type="project" value="EcoCyc"/>
</dbReference>
<dbReference type="FunFam" id="3.40.50.300:FF:000417">
    <property type="entry name" value="Cell division inhibitor SulA"/>
    <property type="match status" value="1"/>
</dbReference>
<dbReference type="Gene3D" id="3.40.50.300">
    <property type="entry name" value="P-loop containing nucleotide triphosphate hydrolases"/>
    <property type="match status" value="1"/>
</dbReference>
<dbReference type="HAMAP" id="MF_01179">
    <property type="entry name" value="SulA"/>
    <property type="match status" value="1"/>
</dbReference>
<dbReference type="InterPro" id="IPR004596">
    <property type="entry name" value="Cell_div_suppressor_SulA"/>
</dbReference>
<dbReference type="InterPro" id="IPR027417">
    <property type="entry name" value="P-loop_NTPase"/>
</dbReference>
<dbReference type="InterPro" id="IPR050356">
    <property type="entry name" value="SulA_CellDiv_inhibitor"/>
</dbReference>
<dbReference type="InterPro" id="IPR047696">
    <property type="entry name" value="SulA_enterobact"/>
</dbReference>
<dbReference type="NCBIfam" id="NF007892">
    <property type="entry name" value="PRK10595.1"/>
    <property type="match status" value="1"/>
</dbReference>
<dbReference type="NCBIfam" id="TIGR00623">
    <property type="entry name" value="SOS_SulA_coli"/>
    <property type="match status" value="1"/>
</dbReference>
<dbReference type="PANTHER" id="PTHR35369">
    <property type="entry name" value="BLR3025 PROTEIN-RELATED"/>
    <property type="match status" value="1"/>
</dbReference>
<dbReference type="PANTHER" id="PTHR35369:SF4">
    <property type="entry name" value="CELL DIVISION INHIBITOR SULA"/>
    <property type="match status" value="1"/>
</dbReference>
<dbReference type="Pfam" id="PF03846">
    <property type="entry name" value="SulA"/>
    <property type="match status" value="1"/>
</dbReference>
<dbReference type="PIRSF" id="PIRSF003093">
    <property type="entry name" value="SulA"/>
    <property type="match status" value="1"/>
</dbReference>
<dbReference type="SUPFAM" id="SSF52540">
    <property type="entry name" value="P-loop containing nucleoside triphosphate hydrolases"/>
    <property type="match status" value="1"/>
</dbReference>
<evidence type="ECO:0000250" key="1"/>
<evidence type="ECO:0000269" key="2">
    <source>
    </source>
</evidence>
<evidence type="ECO:0000269" key="3">
    <source>
    </source>
</evidence>
<evidence type="ECO:0000269" key="4">
    <source>
    </source>
</evidence>
<evidence type="ECO:0000269" key="5">
    <source>
    </source>
</evidence>
<evidence type="ECO:0000269" key="6">
    <source>
    </source>
</evidence>
<evidence type="ECO:0000269" key="7">
    <source>
    </source>
</evidence>
<evidence type="ECO:0000269" key="8">
    <source>
    </source>
</evidence>
<evidence type="ECO:0000269" key="9">
    <source>
    </source>
</evidence>
<evidence type="ECO:0000269" key="10">
    <source>
    </source>
</evidence>
<evidence type="ECO:0000269" key="11">
    <source>
    </source>
</evidence>
<evidence type="ECO:0000269" key="12">
    <source>
    </source>
</evidence>
<evidence type="ECO:0000269" key="13">
    <source>
    </source>
</evidence>
<evidence type="ECO:0000269" key="14">
    <source>
    </source>
</evidence>
<evidence type="ECO:0000269" key="15">
    <source>
    </source>
</evidence>
<evidence type="ECO:0000269" key="16">
    <source>
    </source>
</evidence>
<evidence type="ECO:0000269" key="17">
    <source>
    </source>
</evidence>
<evidence type="ECO:0000305" key="18"/>
<protein>
    <recommendedName>
        <fullName>Cell division inhibitor SulA</fullName>
    </recommendedName>
</protein>
<organism>
    <name type="scientific">Escherichia coli (strain K12)</name>
    <dbReference type="NCBI Taxonomy" id="83333"/>
    <lineage>
        <taxon>Bacteria</taxon>
        <taxon>Pseudomonadati</taxon>
        <taxon>Pseudomonadota</taxon>
        <taxon>Gammaproteobacteria</taxon>
        <taxon>Enterobacterales</taxon>
        <taxon>Enterobacteriaceae</taxon>
        <taxon>Escherichia</taxon>
    </lineage>
</organism>
<comment type="function">
    <text evidence="3 5 7 8 11 14 17">Component of the SOS system and an inhibitor of cell division. Accumulation of SulA causes rapid cessation of cell division and the appearance of long, non-septate filaments. In the presence of GTP, binds a polymerization-competent form of FtsZ in a 1:1 ratio, thus inhibiting FtsZ polymerization and therefore preventing it from participating in the assembly of the Z ring. This mechanism prevents the premature segregation of damaged DNA to daughter cells during cell division. The effect of overexpression of SulA is neutralized by antitoxin CbeA (yeeU) (PubMed:22515815).</text>
</comment>
<comment type="subunit">
    <text evidence="9 13">Interacts with FtsZ.</text>
</comment>
<comment type="interaction">
    <interactant intactId="EBI-2012039">
        <id>P0AFZ5</id>
    </interactant>
    <interactant intactId="EBI-369317">
        <id>P0A6H5</id>
        <label>hslU</label>
    </interactant>
    <organismsDiffer>false</organismsDiffer>
    <experiments>5</experiments>
</comment>
<comment type="induction">
    <text evidence="6 10">By DNA damage, as part of the SOS response, repressed by LexA (PubMed:3297925). Induced 8-fold by hydroxyurea (at protein level) (PubMed:20005847).</text>
</comment>
<comment type="PTM">
    <text evidence="2 4 12 16">Is rapidly cleaved and degraded by the Lon protease once DNA damage is repaired.</text>
</comment>
<comment type="similarity">
    <text evidence="18">Belongs to the SulA family.</text>
</comment>
<comment type="sequence caution" evidence="18">
    <conflict type="frameshift">
        <sequence resource="EMBL-CDS" id="CAA23587"/>
    </conflict>
</comment>
<proteinExistence type="evidence at protein level"/>
<accession>P0AFZ5</accession>
<accession>P03840</accession>
<accession>P08846</accession>
<accession>P71224</accession>
<gene>
    <name type="primary">sulA</name>
    <name type="synonym">sfiA</name>
    <name type="ordered locus">b0958</name>
    <name type="ordered locus">JW0941</name>
</gene>